<feature type="initiator methionine" description="Removed" evidence="1">
    <location>
        <position position="1"/>
    </location>
</feature>
<feature type="chain" id="PRO_0000157499" description="Large ribosomal subunit protein bL12">
    <location>
        <begin position="2"/>
        <end position="130"/>
    </location>
</feature>
<comment type="function">
    <text evidence="2">Forms part of the ribosomal stalk which helps the ribosome interact with GTP-bound translation factors. Is thus essential for accurate translation.</text>
</comment>
<comment type="subunit">
    <text evidence="2">Homodimer. Part of the ribosomal stalk of the 50S ribosomal subunit. Forms a multimeric L10(L12)X complex, where L10 forms an elongated spine to which 2 to 4 L12 dimers bind in a sequential fashion. Binds GTP-bound translation factors.</text>
</comment>
<comment type="similarity">
    <text evidence="2">Belongs to the bacterial ribosomal protein bL12 family.</text>
</comment>
<evidence type="ECO:0000250" key="1"/>
<evidence type="ECO:0000255" key="2">
    <source>
        <dbReference type="HAMAP-Rule" id="MF_00368"/>
    </source>
</evidence>
<evidence type="ECO:0000305" key="3"/>
<name>RL7_NOSS1</name>
<protein>
    <recommendedName>
        <fullName evidence="2">Large ribosomal subunit protein bL12</fullName>
    </recommendedName>
    <alternativeName>
        <fullName evidence="3">50S ribosomal protein L7/L12</fullName>
    </alternativeName>
</protein>
<dbReference type="EMBL" id="BA000019">
    <property type="protein sequence ID" value="BAB77002.1"/>
    <property type="molecule type" value="Genomic_DNA"/>
</dbReference>
<dbReference type="PIR" id="AG2468">
    <property type="entry name" value="AG2468"/>
</dbReference>
<dbReference type="RefSeq" id="WP_010999427.1">
    <property type="nucleotide sequence ID" value="NZ_RSCN01000005.1"/>
</dbReference>
<dbReference type="SMR" id="Q8YLJ5"/>
<dbReference type="STRING" id="103690.gene:10497364"/>
<dbReference type="KEGG" id="ana:alr5303"/>
<dbReference type="eggNOG" id="COG0222">
    <property type="taxonomic scope" value="Bacteria"/>
</dbReference>
<dbReference type="OrthoDB" id="9811748at2"/>
<dbReference type="Proteomes" id="UP000002483">
    <property type="component" value="Chromosome"/>
</dbReference>
<dbReference type="GO" id="GO:0022625">
    <property type="term" value="C:cytosolic large ribosomal subunit"/>
    <property type="evidence" value="ECO:0007669"/>
    <property type="project" value="TreeGrafter"/>
</dbReference>
<dbReference type="GO" id="GO:0003729">
    <property type="term" value="F:mRNA binding"/>
    <property type="evidence" value="ECO:0007669"/>
    <property type="project" value="TreeGrafter"/>
</dbReference>
<dbReference type="GO" id="GO:0003735">
    <property type="term" value="F:structural constituent of ribosome"/>
    <property type="evidence" value="ECO:0007669"/>
    <property type="project" value="InterPro"/>
</dbReference>
<dbReference type="GO" id="GO:0006412">
    <property type="term" value="P:translation"/>
    <property type="evidence" value="ECO:0007669"/>
    <property type="project" value="UniProtKB-UniRule"/>
</dbReference>
<dbReference type="CDD" id="cd00387">
    <property type="entry name" value="Ribosomal_L7_L12"/>
    <property type="match status" value="1"/>
</dbReference>
<dbReference type="FunFam" id="3.30.1390.10:FF:000001">
    <property type="entry name" value="50S ribosomal protein L7/L12"/>
    <property type="match status" value="1"/>
</dbReference>
<dbReference type="Gene3D" id="3.30.1390.10">
    <property type="match status" value="1"/>
</dbReference>
<dbReference type="Gene3D" id="1.20.5.710">
    <property type="entry name" value="Single helix bin"/>
    <property type="match status" value="1"/>
</dbReference>
<dbReference type="HAMAP" id="MF_00368">
    <property type="entry name" value="Ribosomal_bL12"/>
    <property type="match status" value="1"/>
</dbReference>
<dbReference type="InterPro" id="IPR000206">
    <property type="entry name" value="Ribosomal_bL12"/>
</dbReference>
<dbReference type="InterPro" id="IPR013823">
    <property type="entry name" value="Ribosomal_bL12_C"/>
</dbReference>
<dbReference type="InterPro" id="IPR014719">
    <property type="entry name" value="Ribosomal_bL12_C/ClpS-like"/>
</dbReference>
<dbReference type="InterPro" id="IPR008932">
    <property type="entry name" value="Ribosomal_bL12_oligo"/>
</dbReference>
<dbReference type="InterPro" id="IPR036235">
    <property type="entry name" value="Ribosomal_bL12_oligo_N_sf"/>
</dbReference>
<dbReference type="NCBIfam" id="TIGR00855">
    <property type="entry name" value="L12"/>
    <property type="match status" value="1"/>
</dbReference>
<dbReference type="PANTHER" id="PTHR45987">
    <property type="entry name" value="39S RIBOSOMAL PROTEIN L12"/>
    <property type="match status" value="1"/>
</dbReference>
<dbReference type="PANTHER" id="PTHR45987:SF4">
    <property type="entry name" value="LARGE RIBOSOMAL SUBUNIT PROTEIN BL12M"/>
    <property type="match status" value="1"/>
</dbReference>
<dbReference type="Pfam" id="PF00542">
    <property type="entry name" value="Ribosomal_L12"/>
    <property type="match status" value="1"/>
</dbReference>
<dbReference type="Pfam" id="PF16320">
    <property type="entry name" value="Ribosomal_L12_N"/>
    <property type="match status" value="1"/>
</dbReference>
<dbReference type="SUPFAM" id="SSF54736">
    <property type="entry name" value="ClpS-like"/>
    <property type="match status" value="1"/>
</dbReference>
<dbReference type="SUPFAM" id="SSF48300">
    <property type="entry name" value="Ribosomal protein L7/12, oligomerisation (N-terminal) domain"/>
    <property type="match status" value="1"/>
</dbReference>
<organism>
    <name type="scientific">Nostoc sp. (strain PCC 7120 / SAG 25.82 / UTEX 2576)</name>
    <dbReference type="NCBI Taxonomy" id="103690"/>
    <lineage>
        <taxon>Bacteria</taxon>
        <taxon>Bacillati</taxon>
        <taxon>Cyanobacteriota</taxon>
        <taxon>Cyanophyceae</taxon>
        <taxon>Nostocales</taxon>
        <taxon>Nostocaceae</taxon>
        <taxon>Nostoc</taxon>
    </lineage>
</organism>
<accession>Q8YLJ5</accession>
<keyword id="KW-1185">Reference proteome</keyword>
<keyword id="KW-0687">Ribonucleoprotein</keyword>
<keyword id="KW-0689">Ribosomal protein</keyword>
<reference key="1">
    <citation type="journal article" date="2001" name="DNA Res.">
        <title>Complete genomic sequence of the filamentous nitrogen-fixing cyanobacterium Anabaena sp. strain PCC 7120.</title>
        <authorList>
            <person name="Kaneko T."/>
            <person name="Nakamura Y."/>
            <person name="Wolk C.P."/>
            <person name="Kuritz T."/>
            <person name="Sasamoto S."/>
            <person name="Watanabe A."/>
            <person name="Iriguchi M."/>
            <person name="Ishikawa A."/>
            <person name="Kawashima K."/>
            <person name="Kimura T."/>
            <person name="Kishida Y."/>
            <person name="Kohara M."/>
            <person name="Matsumoto M."/>
            <person name="Matsuno A."/>
            <person name="Muraki A."/>
            <person name="Nakazaki N."/>
            <person name="Shimpo S."/>
            <person name="Sugimoto M."/>
            <person name="Takazawa M."/>
            <person name="Yamada M."/>
            <person name="Yasuda M."/>
            <person name="Tabata S."/>
        </authorList>
    </citation>
    <scope>NUCLEOTIDE SEQUENCE [LARGE SCALE GENOMIC DNA]</scope>
    <source>
        <strain>PCC 7120 / SAG 25.82 / UTEX 2576</strain>
    </source>
</reference>
<gene>
    <name evidence="2" type="primary">rplL</name>
    <name evidence="2" type="synonym">rpl12</name>
    <name type="ordered locus">alr5303</name>
</gene>
<sequence length="130" mass="13458">MSAATDQILDQLKSLSLLEAAELVKQIEEAFGVSAAAPAGGMMMMAAPGAAAAAEPVEEQTEFDVVLESVPADKKIAVLKIVREITGLGLKEAKDLVEAAPKAVKEAIAKDAAEDAKKRIEEAGGKVTVK</sequence>
<proteinExistence type="inferred from homology"/>